<dbReference type="EC" id="5.4.3.8" evidence="1"/>
<dbReference type="EMBL" id="CP000503">
    <property type="protein sequence ID" value="ABM25862.1"/>
    <property type="molecule type" value="Genomic_DNA"/>
</dbReference>
<dbReference type="RefSeq" id="WP_011790314.1">
    <property type="nucleotide sequence ID" value="NC_008750.1"/>
</dbReference>
<dbReference type="SMR" id="A1RMG7"/>
<dbReference type="GeneID" id="67442636"/>
<dbReference type="KEGG" id="shw:Sputw3181_3045"/>
<dbReference type="HOGENOM" id="CLU_016922_1_5_6"/>
<dbReference type="UniPathway" id="UPA00251">
    <property type="reaction ID" value="UER00317"/>
</dbReference>
<dbReference type="Proteomes" id="UP000002597">
    <property type="component" value="Chromosome"/>
</dbReference>
<dbReference type="GO" id="GO:0005737">
    <property type="term" value="C:cytoplasm"/>
    <property type="evidence" value="ECO:0007669"/>
    <property type="project" value="UniProtKB-SubCell"/>
</dbReference>
<dbReference type="GO" id="GO:0042286">
    <property type="term" value="F:glutamate-1-semialdehyde 2,1-aminomutase activity"/>
    <property type="evidence" value="ECO:0007669"/>
    <property type="project" value="UniProtKB-UniRule"/>
</dbReference>
<dbReference type="GO" id="GO:0030170">
    <property type="term" value="F:pyridoxal phosphate binding"/>
    <property type="evidence" value="ECO:0007669"/>
    <property type="project" value="InterPro"/>
</dbReference>
<dbReference type="GO" id="GO:0008483">
    <property type="term" value="F:transaminase activity"/>
    <property type="evidence" value="ECO:0007669"/>
    <property type="project" value="InterPro"/>
</dbReference>
<dbReference type="GO" id="GO:0006782">
    <property type="term" value="P:protoporphyrinogen IX biosynthetic process"/>
    <property type="evidence" value="ECO:0007669"/>
    <property type="project" value="UniProtKB-UniRule"/>
</dbReference>
<dbReference type="CDD" id="cd00610">
    <property type="entry name" value="OAT_like"/>
    <property type="match status" value="1"/>
</dbReference>
<dbReference type="FunFam" id="3.40.640.10:FF:000021">
    <property type="entry name" value="Glutamate-1-semialdehyde 2,1-aminomutase"/>
    <property type="match status" value="1"/>
</dbReference>
<dbReference type="Gene3D" id="3.90.1150.10">
    <property type="entry name" value="Aspartate Aminotransferase, domain 1"/>
    <property type="match status" value="1"/>
</dbReference>
<dbReference type="Gene3D" id="3.40.640.10">
    <property type="entry name" value="Type I PLP-dependent aspartate aminotransferase-like (Major domain)"/>
    <property type="match status" value="1"/>
</dbReference>
<dbReference type="HAMAP" id="MF_00375">
    <property type="entry name" value="HemL_aminotrans_3"/>
    <property type="match status" value="1"/>
</dbReference>
<dbReference type="InterPro" id="IPR004639">
    <property type="entry name" value="4pyrrol_synth_GluAld_NH2Trfase"/>
</dbReference>
<dbReference type="InterPro" id="IPR005814">
    <property type="entry name" value="Aminotrans_3"/>
</dbReference>
<dbReference type="InterPro" id="IPR049704">
    <property type="entry name" value="Aminotrans_3_PPA_site"/>
</dbReference>
<dbReference type="InterPro" id="IPR015424">
    <property type="entry name" value="PyrdxlP-dep_Trfase"/>
</dbReference>
<dbReference type="InterPro" id="IPR015421">
    <property type="entry name" value="PyrdxlP-dep_Trfase_major"/>
</dbReference>
<dbReference type="InterPro" id="IPR015422">
    <property type="entry name" value="PyrdxlP-dep_Trfase_small"/>
</dbReference>
<dbReference type="NCBIfam" id="TIGR00713">
    <property type="entry name" value="hemL"/>
    <property type="match status" value="1"/>
</dbReference>
<dbReference type="NCBIfam" id="NF000818">
    <property type="entry name" value="PRK00062.1"/>
    <property type="match status" value="1"/>
</dbReference>
<dbReference type="PANTHER" id="PTHR43713">
    <property type="entry name" value="GLUTAMATE-1-SEMIALDEHYDE 2,1-AMINOMUTASE"/>
    <property type="match status" value="1"/>
</dbReference>
<dbReference type="PANTHER" id="PTHR43713:SF3">
    <property type="entry name" value="GLUTAMATE-1-SEMIALDEHYDE 2,1-AMINOMUTASE 1, CHLOROPLASTIC-RELATED"/>
    <property type="match status" value="1"/>
</dbReference>
<dbReference type="Pfam" id="PF00202">
    <property type="entry name" value="Aminotran_3"/>
    <property type="match status" value="1"/>
</dbReference>
<dbReference type="SUPFAM" id="SSF53383">
    <property type="entry name" value="PLP-dependent transferases"/>
    <property type="match status" value="1"/>
</dbReference>
<dbReference type="PROSITE" id="PS00600">
    <property type="entry name" value="AA_TRANSFER_CLASS_3"/>
    <property type="match status" value="1"/>
</dbReference>
<feature type="chain" id="PRO_0000300951" description="Glutamate-1-semialdehyde 2,1-aminomutase">
    <location>
        <begin position="1"/>
        <end position="430"/>
    </location>
</feature>
<feature type="modified residue" description="N6-(pyridoxal phosphate)lysine" evidence="1">
    <location>
        <position position="265"/>
    </location>
</feature>
<gene>
    <name evidence="1" type="primary">hemL</name>
    <name type="ordered locus">Sputw3181_3045</name>
</gene>
<protein>
    <recommendedName>
        <fullName evidence="1">Glutamate-1-semialdehyde 2,1-aminomutase</fullName>
        <shortName evidence="1">GSA</shortName>
        <ecNumber evidence="1">5.4.3.8</ecNumber>
    </recommendedName>
    <alternativeName>
        <fullName evidence="1">Glutamate-1-semialdehyde aminotransferase</fullName>
        <shortName evidence="1">GSA-AT</shortName>
    </alternativeName>
</protein>
<evidence type="ECO:0000255" key="1">
    <source>
        <dbReference type="HAMAP-Rule" id="MF_00375"/>
    </source>
</evidence>
<proteinExistence type="inferred from homology"/>
<organism>
    <name type="scientific">Shewanella sp. (strain W3-18-1)</name>
    <dbReference type="NCBI Taxonomy" id="351745"/>
    <lineage>
        <taxon>Bacteria</taxon>
        <taxon>Pseudomonadati</taxon>
        <taxon>Pseudomonadota</taxon>
        <taxon>Gammaproteobacteria</taxon>
        <taxon>Alteromonadales</taxon>
        <taxon>Shewanellaceae</taxon>
        <taxon>Shewanella</taxon>
    </lineage>
</organism>
<reference key="1">
    <citation type="submission" date="2006-12" db="EMBL/GenBank/DDBJ databases">
        <title>Complete sequence of Shewanella sp. W3-18-1.</title>
        <authorList>
            <consortium name="US DOE Joint Genome Institute"/>
            <person name="Copeland A."/>
            <person name="Lucas S."/>
            <person name="Lapidus A."/>
            <person name="Barry K."/>
            <person name="Detter J.C."/>
            <person name="Glavina del Rio T."/>
            <person name="Hammon N."/>
            <person name="Israni S."/>
            <person name="Dalin E."/>
            <person name="Tice H."/>
            <person name="Pitluck S."/>
            <person name="Chain P."/>
            <person name="Malfatti S."/>
            <person name="Shin M."/>
            <person name="Vergez L."/>
            <person name="Schmutz J."/>
            <person name="Larimer F."/>
            <person name="Land M."/>
            <person name="Hauser L."/>
            <person name="Kyrpides N."/>
            <person name="Lykidis A."/>
            <person name="Tiedje J."/>
            <person name="Richardson P."/>
        </authorList>
    </citation>
    <scope>NUCLEOTIDE SEQUENCE [LARGE SCALE GENOMIC DNA]</scope>
    <source>
        <strain>W3-18-1</strain>
    </source>
</reference>
<name>GSA_SHESW</name>
<sequence>MTRSEALFEQAKKTIPGGVNSPVRAFNGVGGSPLFIEKANGAYIYDADGKAYIDYVGSWGPMILGHNHPKIRAAVLAAVENGLSFGAPTELEVQMAEKVISMVPSIEQVRMVSSGTEATMSAIRLARGFTNRDKILKFEGCYHGHADCLLVKAGSGALTLGQPSSPGIPEDFAKHTLTAVYNDLDSVRTLFEQYPTEISCIIIEPVAGNMNCIPPVPGFLQGLRDMCDEFGALLIIDEVMTGFRVSQSGAQGYYGVTPDLTTLGKVIGGGMPVGAFGGRKDVMQFIAPTGPVYQAGTLSGNPIAMSAGLAQMDALCEEGLYEALSAKTKRIAEGFKAAADKHGIPMAINYVGGMFGFFFTEQEQITRFDQVTKCNIEHFRTFYHGMLDEGVYLAPSAYEAGFLSMAHGEEELRLTLEAADRVLASMKTES</sequence>
<keyword id="KW-0963">Cytoplasm</keyword>
<keyword id="KW-0413">Isomerase</keyword>
<keyword id="KW-0627">Porphyrin biosynthesis</keyword>
<keyword id="KW-0663">Pyridoxal phosphate</keyword>
<accession>A1RMG7</accession>
<comment type="catalytic activity">
    <reaction evidence="1">
        <text>(S)-4-amino-5-oxopentanoate = 5-aminolevulinate</text>
        <dbReference type="Rhea" id="RHEA:14265"/>
        <dbReference type="ChEBI" id="CHEBI:57501"/>
        <dbReference type="ChEBI" id="CHEBI:356416"/>
        <dbReference type="EC" id="5.4.3.8"/>
    </reaction>
</comment>
<comment type="cofactor">
    <cofactor evidence="1">
        <name>pyridoxal 5'-phosphate</name>
        <dbReference type="ChEBI" id="CHEBI:597326"/>
    </cofactor>
</comment>
<comment type="pathway">
    <text evidence="1">Porphyrin-containing compound metabolism; protoporphyrin-IX biosynthesis; 5-aminolevulinate from L-glutamyl-tRNA(Glu): step 2/2.</text>
</comment>
<comment type="subunit">
    <text evidence="1">Homodimer.</text>
</comment>
<comment type="subcellular location">
    <subcellularLocation>
        <location evidence="1">Cytoplasm</location>
    </subcellularLocation>
</comment>
<comment type="similarity">
    <text evidence="1">Belongs to the class-III pyridoxal-phosphate-dependent aminotransferase family. HemL subfamily.</text>
</comment>